<sequence>MQALIEISDKQYLVQPGDELFIPRQQAEVGDVLDIKPMVAIDQENTTLQPSGNVQVKVLEHLKGEKVVVFKKKRRKRYQCRNGHRQQMTKVEVLSM</sequence>
<protein>
    <recommendedName>
        <fullName evidence="1">Large ribosomal subunit protein bL21</fullName>
    </recommendedName>
    <alternativeName>
        <fullName evidence="2">50S ribosomal protein L21</fullName>
    </alternativeName>
</protein>
<organism>
    <name type="scientific">Prosthecochloris aestuarii (strain DSM 271 / SK 413)</name>
    <dbReference type="NCBI Taxonomy" id="290512"/>
    <lineage>
        <taxon>Bacteria</taxon>
        <taxon>Pseudomonadati</taxon>
        <taxon>Chlorobiota</taxon>
        <taxon>Chlorobiia</taxon>
        <taxon>Chlorobiales</taxon>
        <taxon>Chlorobiaceae</taxon>
        <taxon>Prosthecochloris</taxon>
    </lineage>
</organism>
<dbReference type="EMBL" id="CP001108">
    <property type="protein sequence ID" value="ACF46619.1"/>
    <property type="molecule type" value="Genomic_DNA"/>
</dbReference>
<dbReference type="RefSeq" id="WP_012506152.1">
    <property type="nucleotide sequence ID" value="NC_011059.1"/>
</dbReference>
<dbReference type="SMR" id="B4S9E9"/>
<dbReference type="STRING" id="290512.Paes_1601"/>
<dbReference type="KEGG" id="paa:Paes_1601"/>
<dbReference type="eggNOG" id="COG0261">
    <property type="taxonomic scope" value="Bacteria"/>
</dbReference>
<dbReference type="HOGENOM" id="CLU_061463_3_2_10"/>
<dbReference type="Proteomes" id="UP000002725">
    <property type="component" value="Chromosome"/>
</dbReference>
<dbReference type="GO" id="GO:0005737">
    <property type="term" value="C:cytoplasm"/>
    <property type="evidence" value="ECO:0007669"/>
    <property type="project" value="UniProtKB-ARBA"/>
</dbReference>
<dbReference type="GO" id="GO:1990904">
    <property type="term" value="C:ribonucleoprotein complex"/>
    <property type="evidence" value="ECO:0007669"/>
    <property type="project" value="UniProtKB-KW"/>
</dbReference>
<dbReference type="GO" id="GO:0005840">
    <property type="term" value="C:ribosome"/>
    <property type="evidence" value="ECO:0007669"/>
    <property type="project" value="UniProtKB-KW"/>
</dbReference>
<dbReference type="GO" id="GO:0019843">
    <property type="term" value="F:rRNA binding"/>
    <property type="evidence" value="ECO:0007669"/>
    <property type="project" value="UniProtKB-UniRule"/>
</dbReference>
<dbReference type="GO" id="GO:0003735">
    <property type="term" value="F:structural constituent of ribosome"/>
    <property type="evidence" value="ECO:0007669"/>
    <property type="project" value="InterPro"/>
</dbReference>
<dbReference type="GO" id="GO:0006412">
    <property type="term" value="P:translation"/>
    <property type="evidence" value="ECO:0007669"/>
    <property type="project" value="UniProtKB-UniRule"/>
</dbReference>
<dbReference type="HAMAP" id="MF_01363">
    <property type="entry name" value="Ribosomal_bL21"/>
    <property type="match status" value="1"/>
</dbReference>
<dbReference type="InterPro" id="IPR028909">
    <property type="entry name" value="bL21-like"/>
</dbReference>
<dbReference type="InterPro" id="IPR036164">
    <property type="entry name" value="bL21-like_sf"/>
</dbReference>
<dbReference type="InterPro" id="IPR001787">
    <property type="entry name" value="Ribosomal_bL21"/>
</dbReference>
<dbReference type="InterPro" id="IPR018258">
    <property type="entry name" value="Ribosomal_bL21_CS"/>
</dbReference>
<dbReference type="NCBIfam" id="TIGR00061">
    <property type="entry name" value="L21"/>
    <property type="match status" value="1"/>
</dbReference>
<dbReference type="PANTHER" id="PTHR21349">
    <property type="entry name" value="50S RIBOSOMAL PROTEIN L21"/>
    <property type="match status" value="1"/>
</dbReference>
<dbReference type="PANTHER" id="PTHR21349:SF0">
    <property type="entry name" value="LARGE RIBOSOMAL SUBUNIT PROTEIN BL21M"/>
    <property type="match status" value="1"/>
</dbReference>
<dbReference type="Pfam" id="PF00829">
    <property type="entry name" value="Ribosomal_L21p"/>
    <property type="match status" value="1"/>
</dbReference>
<dbReference type="SUPFAM" id="SSF141091">
    <property type="entry name" value="L21p-like"/>
    <property type="match status" value="1"/>
</dbReference>
<dbReference type="PROSITE" id="PS01169">
    <property type="entry name" value="RIBOSOMAL_L21"/>
    <property type="match status" value="1"/>
</dbReference>
<proteinExistence type="inferred from homology"/>
<feature type="chain" id="PRO_1000143834" description="Large ribosomal subunit protein bL21">
    <location>
        <begin position="1"/>
        <end position="96"/>
    </location>
</feature>
<name>RL21_PROA2</name>
<gene>
    <name evidence="1" type="primary">rplU</name>
    <name type="ordered locus">Paes_1601</name>
</gene>
<accession>B4S9E9</accession>
<keyword id="KW-0687">Ribonucleoprotein</keyword>
<keyword id="KW-0689">Ribosomal protein</keyword>
<keyword id="KW-0694">RNA-binding</keyword>
<keyword id="KW-0699">rRNA-binding</keyword>
<evidence type="ECO:0000255" key="1">
    <source>
        <dbReference type="HAMAP-Rule" id="MF_01363"/>
    </source>
</evidence>
<evidence type="ECO:0000305" key="2"/>
<comment type="function">
    <text evidence="1">This protein binds to 23S rRNA in the presence of protein L20.</text>
</comment>
<comment type="subunit">
    <text evidence="1">Part of the 50S ribosomal subunit. Contacts protein L20.</text>
</comment>
<comment type="similarity">
    <text evidence="1">Belongs to the bacterial ribosomal protein bL21 family.</text>
</comment>
<reference key="1">
    <citation type="submission" date="2008-06" db="EMBL/GenBank/DDBJ databases">
        <title>Complete sequence of chromosome of Prosthecochloris aestuarii DSM 271.</title>
        <authorList>
            <consortium name="US DOE Joint Genome Institute"/>
            <person name="Lucas S."/>
            <person name="Copeland A."/>
            <person name="Lapidus A."/>
            <person name="Glavina del Rio T."/>
            <person name="Dalin E."/>
            <person name="Tice H."/>
            <person name="Bruce D."/>
            <person name="Goodwin L."/>
            <person name="Pitluck S."/>
            <person name="Schmutz J."/>
            <person name="Larimer F."/>
            <person name="Land M."/>
            <person name="Hauser L."/>
            <person name="Kyrpides N."/>
            <person name="Anderson I."/>
            <person name="Liu Z."/>
            <person name="Li T."/>
            <person name="Zhao F."/>
            <person name="Overmann J."/>
            <person name="Bryant D.A."/>
            <person name="Richardson P."/>
        </authorList>
    </citation>
    <scope>NUCLEOTIDE SEQUENCE [LARGE SCALE GENOMIC DNA]</scope>
    <source>
        <strain>DSM 271 / SK 413</strain>
    </source>
</reference>